<name>SWP25_NOSB1</name>
<protein>
    <recommendedName>
        <fullName>Spore wall protein 25</fullName>
    </recommendedName>
</protein>
<evidence type="ECO:0000255" key="1"/>
<evidence type="ECO:0000269" key="2">
    <source>
    </source>
</evidence>
<gene>
    <name type="primary">SWP25</name>
    <name type="synonym">HSWP2</name>
    <name type="ORF">NBO_940g0001</name>
</gene>
<keyword id="KW-0325">Glycoprotein</keyword>
<keyword id="KW-1185">Reference proteome</keyword>
<keyword id="KW-0732">Signal</keyword>
<keyword id="KW-0749">Sporulation</keyword>
<reference key="1">
    <citation type="journal article" date="2009" name="J. Eukaryot. Microbiol.">
        <title>SWP25, a novel protein associated with the Nosema bombycis endospore.</title>
        <authorList>
            <person name="Wu Z."/>
            <person name="Li Y."/>
            <person name="Pan G."/>
            <person name="Zhou Z."/>
            <person name="Xiang Z."/>
        </authorList>
    </citation>
    <scope>NUCLEOTIDE SEQUENCE [GENOMIC DNA]</scope>
    <scope>IDENTIFICATION BY MASS SPECTROMETRY</scope>
    <scope>FUNCTION</scope>
    <scope>DOMAIN</scope>
    <scope>SUBCELLULAR LOCATION</scope>
    <scope>DEVELOPMENTAL STAGE</scope>
    <source>
        <strain>CQ1 / CVCC 102059</strain>
    </source>
</reference>
<reference key="2">
    <citation type="journal article" date="2013" name="BMC Genomics">
        <title>Comparative genomics of parasitic silkworm microsporidia reveal an association between genome expansion and host adaptation.</title>
        <authorList>
            <person name="Pan G."/>
            <person name="Xu J."/>
            <person name="Li T."/>
            <person name="Xia Q."/>
            <person name="Liu S.L."/>
            <person name="Zhang G."/>
            <person name="Li S."/>
            <person name="Li C."/>
            <person name="Liu H."/>
            <person name="Yang L."/>
            <person name="Liu T."/>
            <person name="Zhang X."/>
            <person name="Wu Z."/>
            <person name="Fan W."/>
            <person name="Dang X."/>
            <person name="Xiang H."/>
            <person name="Tao M."/>
            <person name="Li Y."/>
            <person name="Hu J."/>
            <person name="Li Z."/>
            <person name="Lin L."/>
            <person name="Luo J."/>
            <person name="Geng L."/>
            <person name="Wang L."/>
            <person name="Long M."/>
            <person name="Wan Y."/>
            <person name="He N."/>
            <person name="Zhang Z."/>
            <person name="Lu C."/>
            <person name="Keeling P.J."/>
            <person name="Wang J."/>
            <person name="Xiang Z."/>
            <person name="Zhou Z."/>
        </authorList>
    </citation>
    <scope>NUCLEOTIDE SEQUENCE [LARGE SCALE GENOMIC DNA] OF 89-268</scope>
    <source>
        <strain>CQ1 / CVCC 102059</strain>
    </source>
</reference>
<feature type="signal peptide" evidence="1">
    <location>
        <begin position="1"/>
        <end position="25"/>
    </location>
</feature>
<feature type="chain" id="PRO_0000385180" description="Spore wall protein 25">
    <location>
        <begin position="26"/>
        <end position="268"/>
    </location>
</feature>
<feature type="short sequence motif" description="HBM">
    <location>
        <begin position="77"/>
        <end position="82"/>
    </location>
</feature>
<feature type="glycosylation site" description="N-linked (GlcNAc...) asparagine" evidence="1">
    <location>
        <position position="27"/>
    </location>
</feature>
<feature type="glycosylation site" description="N-linked (GlcNAc...) asparagine" evidence="1">
    <location>
        <position position="133"/>
    </location>
</feature>
<feature type="glycosylation site" description="N-linked (GlcNAc...) asparagine" evidence="1">
    <location>
        <position position="150"/>
    </location>
</feature>
<sequence length="268" mass="30733">MFSTKQVVLSSLLFISSIYTSNVNGKNLSVFGAFFGSPNDNDNAREHCCSPRNKFHLTSFSSGCDLQKEVECLRAECKKSKECCNVVSLCSGLSECEYVEKTCDAIKQYYQKQAINTDVKITLVLKWIYKCMNTTSRAKLAVFTAHAIFNTSAFACLEAEGTWKYRSRGLLAIQGEKNYGLLTSYSRNRENFKECPHRLADLNCDVISVTVDWWYRNVGKCCKDYFGSLEILKPTEWTALKKNCADRESARRLENRRRLYEILVRCYE</sequence>
<comment type="subcellular location">
    <subcellularLocation>
        <location evidence="2">Spore wall</location>
    </subcellularLocation>
</comment>
<comment type="developmental stage">
    <text evidence="2">Synthesized during sporogony.</text>
</comment>
<comment type="domain">
    <text evidence="2">Heparin-binding motifs (HBMs) are characterized by an XBBXBX or XBBBXXBX sequence, where X is any neutral amino acid and B is a positively charged basic amino acid, and are defined as the consensus sequence necessary for protein-heparin interactions.</text>
</comment>
<proteinExistence type="evidence at protein level"/>
<dbReference type="EMBL" id="EF683102">
    <property type="protein sequence ID" value="ABV48890.1"/>
    <property type="molecule type" value="Genomic_DNA"/>
</dbReference>
<dbReference type="EMBL" id="KB909847">
    <property type="protein sequence ID" value="EOB11674.1"/>
    <property type="molecule type" value="Genomic_DNA"/>
</dbReference>
<dbReference type="GlyCosmos" id="B3STN6">
    <property type="glycosylation" value="3 sites, No reported glycans"/>
</dbReference>
<dbReference type="HOGENOM" id="CLU_1865687_0_0_1"/>
<dbReference type="Proteomes" id="UP000016927">
    <property type="component" value="Unassembled WGS sequence"/>
</dbReference>
<dbReference type="GO" id="GO:0031160">
    <property type="term" value="C:spore wall"/>
    <property type="evidence" value="ECO:0007669"/>
    <property type="project" value="UniProtKB-SubCell"/>
</dbReference>
<dbReference type="GO" id="GO:0030435">
    <property type="term" value="P:sporulation resulting in formation of a cellular spore"/>
    <property type="evidence" value="ECO:0007669"/>
    <property type="project" value="UniProtKB-KW"/>
</dbReference>
<organism>
    <name type="scientific">Nosema bombycis (strain CQ1 / CVCC 102059)</name>
    <name type="common">Microsporidian parasite</name>
    <name type="synonym">Pebrine of silkworm</name>
    <dbReference type="NCBI Taxonomy" id="578461"/>
    <lineage>
        <taxon>Eukaryota</taxon>
        <taxon>Fungi</taxon>
        <taxon>Fungi incertae sedis</taxon>
        <taxon>Microsporidia</taxon>
        <taxon>Nosematidae</taxon>
        <taxon>Nosema</taxon>
    </lineage>
</organism>
<accession>B3STN6</accession>
<accession>R0M0X2</accession>